<reference key="1">
    <citation type="submission" date="2003-01" db="EMBL/GenBank/DDBJ databases">
        <title>Chloroplast DNA phylogeny of tribe Heliantheae (Asteraceae).</title>
        <authorList>
            <person name="Panero J.L."/>
            <person name="Baldwin B.G."/>
            <person name="Schilling E.E."/>
            <person name="Clevinger J.A."/>
        </authorList>
    </citation>
    <scope>NUCLEOTIDE SEQUENCE [GENOMIC DNA]</scope>
</reference>
<keyword id="KW-0004">4Fe-4S</keyword>
<keyword id="KW-0150">Chloroplast</keyword>
<keyword id="KW-0408">Iron</keyword>
<keyword id="KW-0411">Iron-sulfur</keyword>
<keyword id="KW-0472">Membrane</keyword>
<keyword id="KW-0479">Metal-binding</keyword>
<keyword id="KW-0520">NAD</keyword>
<keyword id="KW-0521">NADP</keyword>
<keyword id="KW-0934">Plastid</keyword>
<keyword id="KW-0618">Plastoquinone</keyword>
<keyword id="KW-0874">Quinone</keyword>
<keyword id="KW-0677">Repeat</keyword>
<keyword id="KW-0793">Thylakoid</keyword>
<keyword id="KW-1278">Translocase</keyword>
<accession>Q8HVN8</accession>
<evidence type="ECO:0000255" key="1">
    <source>
        <dbReference type="HAMAP-Rule" id="MF_01351"/>
    </source>
</evidence>
<name>NDHI_OTESC</name>
<comment type="function">
    <text evidence="1">NDH shuttles electrons from NAD(P)H:plastoquinone, via FMN and iron-sulfur (Fe-S) centers, to quinones in the photosynthetic chain and possibly in a chloroplast respiratory chain. The immediate electron acceptor for the enzyme in this species is believed to be plastoquinone. Couples the redox reaction to proton translocation, and thus conserves the redox energy in a proton gradient.</text>
</comment>
<comment type="catalytic activity">
    <reaction evidence="1">
        <text>a plastoquinone + NADH + (n+1) H(+)(in) = a plastoquinol + NAD(+) + n H(+)(out)</text>
        <dbReference type="Rhea" id="RHEA:42608"/>
        <dbReference type="Rhea" id="RHEA-COMP:9561"/>
        <dbReference type="Rhea" id="RHEA-COMP:9562"/>
        <dbReference type="ChEBI" id="CHEBI:15378"/>
        <dbReference type="ChEBI" id="CHEBI:17757"/>
        <dbReference type="ChEBI" id="CHEBI:57540"/>
        <dbReference type="ChEBI" id="CHEBI:57945"/>
        <dbReference type="ChEBI" id="CHEBI:62192"/>
    </reaction>
</comment>
<comment type="catalytic activity">
    <reaction evidence="1">
        <text>a plastoquinone + NADPH + (n+1) H(+)(in) = a plastoquinol + NADP(+) + n H(+)(out)</text>
        <dbReference type="Rhea" id="RHEA:42612"/>
        <dbReference type="Rhea" id="RHEA-COMP:9561"/>
        <dbReference type="Rhea" id="RHEA-COMP:9562"/>
        <dbReference type="ChEBI" id="CHEBI:15378"/>
        <dbReference type="ChEBI" id="CHEBI:17757"/>
        <dbReference type="ChEBI" id="CHEBI:57783"/>
        <dbReference type="ChEBI" id="CHEBI:58349"/>
        <dbReference type="ChEBI" id="CHEBI:62192"/>
    </reaction>
</comment>
<comment type="cofactor">
    <cofactor evidence="1">
        <name>[4Fe-4S] cluster</name>
        <dbReference type="ChEBI" id="CHEBI:49883"/>
    </cofactor>
    <text evidence="1">Binds 2 [4Fe-4S] clusters per subunit.</text>
</comment>
<comment type="subunit">
    <text evidence="1">NDH is composed of at least 16 different subunits, 5 of which are encoded in the nucleus.</text>
</comment>
<comment type="subcellular location">
    <subcellularLocation>
        <location evidence="1">Plastid</location>
        <location evidence="1">Chloroplast thylakoid membrane</location>
        <topology evidence="1">Peripheral membrane protein</topology>
    </subcellularLocation>
</comment>
<comment type="similarity">
    <text evidence="1">Belongs to the complex I 23 kDa subunit family.</text>
</comment>
<proteinExistence type="inferred from homology"/>
<sequence>MFPMVTEFMNYGQQTVRAARYIGQGFMITLSHANRLPVTIQYPYEKLITSERFRGRIHFEFDKCIACEVCVRVCPIDLPVVDWKLETDIRKKRLLNYSIDFGICIFCGNCVEYCPTNCLSMTEEYELSTYDRHELNYNQIALGRLPMSIIDDYTIRTIFNLPEIKT</sequence>
<organism>
    <name type="scientific">Oteiza scandens</name>
    <name type="common">Climbing oteiza</name>
    <dbReference type="NCBI Taxonomy" id="183060"/>
    <lineage>
        <taxon>Eukaryota</taxon>
        <taxon>Viridiplantae</taxon>
        <taxon>Streptophyta</taxon>
        <taxon>Embryophyta</taxon>
        <taxon>Tracheophyta</taxon>
        <taxon>Spermatophyta</taxon>
        <taxon>Magnoliopsida</taxon>
        <taxon>eudicotyledons</taxon>
        <taxon>Gunneridae</taxon>
        <taxon>Pentapetalae</taxon>
        <taxon>asterids</taxon>
        <taxon>campanulids</taxon>
        <taxon>Asterales</taxon>
        <taxon>Asteraceae</taxon>
        <taxon>Asteroideae</taxon>
        <taxon>Heliantheae alliance</taxon>
        <taxon>Millerieae</taxon>
        <taxon>Oteiza</taxon>
    </lineage>
</organism>
<protein>
    <recommendedName>
        <fullName evidence="1">NAD(P)H-quinone oxidoreductase subunit I, chloroplastic</fullName>
        <ecNumber evidence="1">7.1.1.-</ecNumber>
    </recommendedName>
    <alternativeName>
        <fullName evidence="1">NAD(P)H dehydrogenase subunit I</fullName>
        <shortName evidence="1">NDH subunit I</shortName>
    </alternativeName>
    <alternativeName>
        <fullName evidence="1">NADH-plastoquinone oxidoreductase subunit I</fullName>
    </alternativeName>
</protein>
<dbReference type="EC" id="7.1.1.-" evidence="1"/>
<dbReference type="EMBL" id="AF383825">
    <property type="protein sequence ID" value="AAN61766.1"/>
    <property type="molecule type" value="Genomic_DNA"/>
</dbReference>
<dbReference type="SMR" id="Q8HVN8"/>
<dbReference type="GO" id="GO:0009535">
    <property type="term" value="C:chloroplast thylakoid membrane"/>
    <property type="evidence" value="ECO:0007669"/>
    <property type="project" value="UniProtKB-SubCell"/>
</dbReference>
<dbReference type="GO" id="GO:0051539">
    <property type="term" value="F:4 iron, 4 sulfur cluster binding"/>
    <property type="evidence" value="ECO:0007669"/>
    <property type="project" value="UniProtKB-KW"/>
</dbReference>
<dbReference type="GO" id="GO:0005506">
    <property type="term" value="F:iron ion binding"/>
    <property type="evidence" value="ECO:0007669"/>
    <property type="project" value="UniProtKB-UniRule"/>
</dbReference>
<dbReference type="GO" id="GO:0008137">
    <property type="term" value="F:NADH dehydrogenase (ubiquinone) activity"/>
    <property type="evidence" value="ECO:0007669"/>
    <property type="project" value="InterPro"/>
</dbReference>
<dbReference type="GO" id="GO:0048038">
    <property type="term" value="F:quinone binding"/>
    <property type="evidence" value="ECO:0007669"/>
    <property type="project" value="UniProtKB-KW"/>
</dbReference>
<dbReference type="GO" id="GO:0019684">
    <property type="term" value="P:photosynthesis, light reaction"/>
    <property type="evidence" value="ECO:0007669"/>
    <property type="project" value="UniProtKB-UniRule"/>
</dbReference>
<dbReference type="FunFam" id="3.30.70.3270:FF:000006">
    <property type="entry name" value="NAD(P)H-quinone oxidoreductase subunit I, chloroplastic"/>
    <property type="match status" value="1"/>
</dbReference>
<dbReference type="Gene3D" id="3.30.70.3270">
    <property type="match status" value="1"/>
</dbReference>
<dbReference type="HAMAP" id="MF_01351">
    <property type="entry name" value="NDH1_NuoI"/>
    <property type="match status" value="1"/>
</dbReference>
<dbReference type="InterPro" id="IPR017896">
    <property type="entry name" value="4Fe4S_Fe-S-bd"/>
</dbReference>
<dbReference type="InterPro" id="IPR017900">
    <property type="entry name" value="4Fe4S_Fe_S_CS"/>
</dbReference>
<dbReference type="InterPro" id="IPR010226">
    <property type="entry name" value="NADH_quinone_OxRdtase_chainI"/>
</dbReference>
<dbReference type="InterPro" id="IPR004497">
    <property type="entry name" value="NDHI"/>
</dbReference>
<dbReference type="NCBIfam" id="TIGR00403">
    <property type="entry name" value="ndhI"/>
    <property type="match status" value="1"/>
</dbReference>
<dbReference type="NCBIfam" id="TIGR01971">
    <property type="entry name" value="NuoI"/>
    <property type="match status" value="1"/>
</dbReference>
<dbReference type="NCBIfam" id="NF004537">
    <property type="entry name" value="PRK05888.1-3"/>
    <property type="match status" value="1"/>
</dbReference>
<dbReference type="PANTHER" id="PTHR47275">
    <property type="entry name" value="NAD(P)H-QUINONE OXIDOREDUCTASE SUBUNIT I, CHLOROPLASTIC"/>
    <property type="match status" value="1"/>
</dbReference>
<dbReference type="PANTHER" id="PTHR47275:SF1">
    <property type="entry name" value="NAD(P)H-QUINONE OXIDOREDUCTASE SUBUNIT I, CHLOROPLASTIC"/>
    <property type="match status" value="1"/>
</dbReference>
<dbReference type="Pfam" id="PF00037">
    <property type="entry name" value="Fer4"/>
    <property type="match status" value="2"/>
</dbReference>
<dbReference type="SUPFAM" id="SSF54862">
    <property type="entry name" value="4Fe-4S ferredoxins"/>
    <property type="match status" value="1"/>
</dbReference>
<dbReference type="PROSITE" id="PS00198">
    <property type="entry name" value="4FE4S_FER_1"/>
    <property type="match status" value="2"/>
</dbReference>
<dbReference type="PROSITE" id="PS51379">
    <property type="entry name" value="4FE4S_FER_2"/>
    <property type="match status" value="2"/>
</dbReference>
<gene>
    <name evidence="1" type="primary">ndhI</name>
</gene>
<feature type="chain" id="PRO_0000250824" description="NAD(P)H-quinone oxidoreductase subunit I, chloroplastic">
    <location>
        <begin position="1"/>
        <end position="166"/>
    </location>
</feature>
<feature type="domain" description="4Fe-4S ferredoxin-type 1" evidence="1">
    <location>
        <begin position="55"/>
        <end position="84"/>
    </location>
</feature>
<feature type="domain" description="4Fe-4S ferredoxin-type 2" evidence="1">
    <location>
        <begin position="95"/>
        <end position="124"/>
    </location>
</feature>
<feature type="binding site" evidence="1">
    <location>
        <position position="64"/>
    </location>
    <ligand>
        <name>[4Fe-4S] cluster</name>
        <dbReference type="ChEBI" id="CHEBI:49883"/>
        <label>1</label>
    </ligand>
</feature>
<feature type="binding site" evidence="1">
    <location>
        <position position="67"/>
    </location>
    <ligand>
        <name>[4Fe-4S] cluster</name>
        <dbReference type="ChEBI" id="CHEBI:49883"/>
        <label>1</label>
    </ligand>
</feature>
<feature type="binding site" evidence="1">
    <location>
        <position position="70"/>
    </location>
    <ligand>
        <name>[4Fe-4S] cluster</name>
        <dbReference type="ChEBI" id="CHEBI:49883"/>
        <label>1</label>
    </ligand>
</feature>
<feature type="binding site" evidence="1">
    <location>
        <position position="74"/>
    </location>
    <ligand>
        <name>[4Fe-4S] cluster</name>
        <dbReference type="ChEBI" id="CHEBI:49883"/>
        <label>2</label>
    </ligand>
</feature>
<feature type="binding site" evidence="1">
    <location>
        <position position="104"/>
    </location>
    <ligand>
        <name>[4Fe-4S] cluster</name>
        <dbReference type="ChEBI" id="CHEBI:49883"/>
        <label>2</label>
    </ligand>
</feature>
<feature type="binding site" evidence="1">
    <location>
        <position position="107"/>
    </location>
    <ligand>
        <name>[4Fe-4S] cluster</name>
        <dbReference type="ChEBI" id="CHEBI:49883"/>
        <label>2</label>
    </ligand>
</feature>
<feature type="binding site" evidence="1">
    <location>
        <position position="110"/>
    </location>
    <ligand>
        <name>[4Fe-4S] cluster</name>
        <dbReference type="ChEBI" id="CHEBI:49883"/>
        <label>2</label>
    </ligand>
</feature>
<feature type="binding site" evidence="1">
    <location>
        <position position="114"/>
    </location>
    <ligand>
        <name>[4Fe-4S] cluster</name>
        <dbReference type="ChEBI" id="CHEBI:49883"/>
        <label>1</label>
    </ligand>
</feature>
<geneLocation type="chloroplast"/>